<keyword id="KW-0028">Amino-acid biosynthesis</keyword>
<keyword id="KW-0963">Cytoplasm</keyword>
<keyword id="KW-0368">Histidine biosynthesis</keyword>
<keyword id="KW-0413">Isomerase</keyword>
<sequence length="245" mass="25938">MLIIPAIDLKDGACVRLRQGLMEDATVFSDDPVAMAAKWVDGGCRRLHLVDLNGAFEGKPVNGEVVTAIARRYPDLPIQIGGGIRSLETIEHYVRAGVSYVIIGTKAVKQPEFVGEACRAFPGKVIVGLDAKDGFVATDGWAEVSEVQVIDLARRFEADGVSAIVYTDISKDGMMQGCNVEATAALANATRIPVIASGGIHNLGDIQKLLDARTPGIIGAITGRAIYEGTLDVAEAQALCDNFKA</sequence>
<name>HIS4_PSEA8</name>
<gene>
    <name evidence="1" type="primary">hisA</name>
    <name type="ordered locus">PLES_55311</name>
</gene>
<reference key="1">
    <citation type="journal article" date="2009" name="Genome Res.">
        <title>Newly introduced genomic prophage islands are critical determinants of in vivo competitiveness in the Liverpool epidemic strain of Pseudomonas aeruginosa.</title>
        <authorList>
            <person name="Winstanley C."/>
            <person name="Langille M.G.I."/>
            <person name="Fothergill J.L."/>
            <person name="Kukavica-Ibrulj I."/>
            <person name="Paradis-Bleau C."/>
            <person name="Sanschagrin F."/>
            <person name="Thomson N.R."/>
            <person name="Winsor G.L."/>
            <person name="Quail M.A."/>
            <person name="Lennard N."/>
            <person name="Bignell A."/>
            <person name="Clarke L."/>
            <person name="Seeger K."/>
            <person name="Saunders D."/>
            <person name="Harris D."/>
            <person name="Parkhill J."/>
            <person name="Hancock R.E.W."/>
            <person name="Brinkman F.S.L."/>
            <person name="Levesque R.C."/>
        </authorList>
    </citation>
    <scope>NUCLEOTIDE SEQUENCE [LARGE SCALE GENOMIC DNA]</scope>
    <source>
        <strain>LESB58</strain>
    </source>
</reference>
<evidence type="ECO:0000255" key="1">
    <source>
        <dbReference type="HAMAP-Rule" id="MF_01014"/>
    </source>
</evidence>
<accession>B7V3N4</accession>
<protein>
    <recommendedName>
        <fullName evidence="1">1-(5-phosphoribosyl)-5-[(5-phosphoribosylamino)methylideneamino] imidazole-4-carboxamide isomerase</fullName>
        <ecNumber evidence="1">5.3.1.16</ecNumber>
    </recommendedName>
    <alternativeName>
        <fullName evidence="1">Phosphoribosylformimino-5-aminoimidazole carboxamide ribotide isomerase</fullName>
    </alternativeName>
</protein>
<comment type="catalytic activity">
    <reaction evidence="1">
        <text>1-(5-phospho-beta-D-ribosyl)-5-[(5-phospho-beta-D-ribosylamino)methylideneamino]imidazole-4-carboxamide = 5-[(5-phospho-1-deoxy-D-ribulos-1-ylimino)methylamino]-1-(5-phospho-beta-D-ribosyl)imidazole-4-carboxamide</text>
        <dbReference type="Rhea" id="RHEA:15469"/>
        <dbReference type="ChEBI" id="CHEBI:58435"/>
        <dbReference type="ChEBI" id="CHEBI:58525"/>
        <dbReference type="EC" id="5.3.1.16"/>
    </reaction>
</comment>
<comment type="pathway">
    <text evidence="1">Amino-acid biosynthesis; L-histidine biosynthesis; L-histidine from 5-phospho-alpha-D-ribose 1-diphosphate: step 4/9.</text>
</comment>
<comment type="subcellular location">
    <subcellularLocation>
        <location evidence="1">Cytoplasm</location>
    </subcellularLocation>
</comment>
<comment type="similarity">
    <text evidence="1">Belongs to the HisA/HisF family.</text>
</comment>
<dbReference type="EC" id="5.3.1.16" evidence="1"/>
<dbReference type="EMBL" id="FM209186">
    <property type="protein sequence ID" value="CAW30285.1"/>
    <property type="molecule type" value="Genomic_DNA"/>
</dbReference>
<dbReference type="RefSeq" id="WP_003106336.1">
    <property type="nucleotide sequence ID" value="NC_011770.1"/>
</dbReference>
<dbReference type="SMR" id="B7V3N4"/>
<dbReference type="KEGG" id="pag:PLES_55311"/>
<dbReference type="HOGENOM" id="CLU_048577_1_1_6"/>
<dbReference type="UniPathway" id="UPA00031">
    <property type="reaction ID" value="UER00009"/>
</dbReference>
<dbReference type="GO" id="GO:0005737">
    <property type="term" value="C:cytoplasm"/>
    <property type="evidence" value="ECO:0007669"/>
    <property type="project" value="UniProtKB-SubCell"/>
</dbReference>
<dbReference type="GO" id="GO:0003949">
    <property type="term" value="F:1-(5-phosphoribosyl)-5-[(5-phosphoribosylamino)methylideneamino]imidazole-4-carboxamide isomerase activity"/>
    <property type="evidence" value="ECO:0007669"/>
    <property type="project" value="UniProtKB-UniRule"/>
</dbReference>
<dbReference type="GO" id="GO:0000105">
    <property type="term" value="P:L-histidine biosynthetic process"/>
    <property type="evidence" value="ECO:0007669"/>
    <property type="project" value="UniProtKB-UniRule"/>
</dbReference>
<dbReference type="GO" id="GO:0000162">
    <property type="term" value="P:L-tryptophan biosynthetic process"/>
    <property type="evidence" value="ECO:0007669"/>
    <property type="project" value="TreeGrafter"/>
</dbReference>
<dbReference type="CDD" id="cd04732">
    <property type="entry name" value="HisA"/>
    <property type="match status" value="1"/>
</dbReference>
<dbReference type="FunFam" id="3.20.20.70:FF:000009">
    <property type="entry name" value="1-(5-phosphoribosyl)-5-[(5-phosphoribosylamino)methylideneamino] imidazole-4-carboxamide isomerase"/>
    <property type="match status" value="1"/>
</dbReference>
<dbReference type="Gene3D" id="3.20.20.70">
    <property type="entry name" value="Aldolase class I"/>
    <property type="match status" value="1"/>
</dbReference>
<dbReference type="HAMAP" id="MF_01014">
    <property type="entry name" value="HisA"/>
    <property type="match status" value="1"/>
</dbReference>
<dbReference type="InterPro" id="IPR013785">
    <property type="entry name" value="Aldolase_TIM"/>
</dbReference>
<dbReference type="InterPro" id="IPR006062">
    <property type="entry name" value="His_biosynth"/>
</dbReference>
<dbReference type="InterPro" id="IPR006063">
    <property type="entry name" value="HisA_bact_arch"/>
</dbReference>
<dbReference type="InterPro" id="IPR044524">
    <property type="entry name" value="Isoase_HisA-like"/>
</dbReference>
<dbReference type="InterPro" id="IPR023016">
    <property type="entry name" value="Isoase_HisA-like_bact"/>
</dbReference>
<dbReference type="InterPro" id="IPR011060">
    <property type="entry name" value="RibuloseP-bd_barrel"/>
</dbReference>
<dbReference type="NCBIfam" id="TIGR00007">
    <property type="entry name" value="1-(5-phosphoribosyl)-5-[(5-phosphoribosylamino)methylideneamino]imidazole-4-carboxamide isomerase"/>
    <property type="match status" value="1"/>
</dbReference>
<dbReference type="PANTHER" id="PTHR43090">
    <property type="entry name" value="1-(5-PHOSPHORIBOSYL)-5-[(5-PHOSPHORIBOSYLAMINO)METHYLIDENEAMINO] IMIDAZOLE-4-CARBOXAMIDE ISOMERASE"/>
    <property type="match status" value="1"/>
</dbReference>
<dbReference type="PANTHER" id="PTHR43090:SF2">
    <property type="entry name" value="1-(5-PHOSPHORIBOSYL)-5-[(5-PHOSPHORIBOSYLAMINO)METHYLIDENEAMINO] IMIDAZOLE-4-CARBOXAMIDE ISOMERASE"/>
    <property type="match status" value="1"/>
</dbReference>
<dbReference type="Pfam" id="PF00977">
    <property type="entry name" value="His_biosynth"/>
    <property type="match status" value="1"/>
</dbReference>
<dbReference type="SUPFAM" id="SSF51366">
    <property type="entry name" value="Ribulose-phoshate binding barrel"/>
    <property type="match status" value="1"/>
</dbReference>
<proteinExistence type="inferred from homology"/>
<organism>
    <name type="scientific">Pseudomonas aeruginosa (strain LESB58)</name>
    <dbReference type="NCBI Taxonomy" id="557722"/>
    <lineage>
        <taxon>Bacteria</taxon>
        <taxon>Pseudomonadati</taxon>
        <taxon>Pseudomonadota</taxon>
        <taxon>Gammaproteobacteria</taxon>
        <taxon>Pseudomonadales</taxon>
        <taxon>Pseudomonadaceae</taxon>
        <taxon>Pseudomonas</taxon>
    </lineage>
</organism>
<feature type="chain" id="PRO_1000135141" description="1-(5-phosphoribosyl)-5-[(5-phosphoribosylamino)methylideneamino] imidazole-4-carboxamide isomerase">
    <location>
        <begin position="1"/>
        <end position="245"/>
    </location>
</feature>
<feature type="active site" description="Proton acceptor" evidence="1">
    <location>
        <position position="8"/>
    </location>
</feature>
<feature type="active site" description="Proton donor" evidence="1">
    <location>
        <position position="130"/>
    </location>
</feature>